<sequence>MRVGVLAIQGSVREHIEKLKLIDGVEAVLAKDKNTLLSLDALIIPGGESTAIGKMIVDFGLKDAILKLNERKIPIWGTCAGMILMAKYIVNDDKVHLGIMDISVKRNAYGSQLDSFKTKLIIPAVSNNEIEAVFIRAPYIENVGNGVRILAKHQGKIVAAQQDNLLATSFHPELTDDLSFYKYFLRLNS</sequence>
<accession>B0K4N6</accession>
<comment type="function">
    <text evidence="1">Catalyzes the hydrolysis of glutamine to glutamate and ammonia as part of the biosynthesis of pyridoxal 5'-phosphate. The resulting ammonia molecule is channeled to the active site of PdxS.</text>
</comment>
<comment type="catalytic activity">
    <reaction evidence="1">
        <text>aldehydo-D-ribose 5-phosphate + D-glyceraldehyde 3-phosphate + L-glutamine = pyridoxal 5'-phosphate + L-glutamate + phosphate + 3 H2O + H(+)</text>
        <dbReference type="Rhea" id="RHEA:31507"/>
        <dbReference type="ChEBI" id="CHEBI:15377"/>
        <dbReference type="ChEBI" id="CHEBI:15378"/>
        <dbReference type="ChEBI" id="CHEBI:29985"/>
        <dbReference type="ChEBI" id="CHEBI:43474"/>
        <dbReference type="ChEBI" id="CHEBI:58273"/>
        <dbReference type="ChEBI" id="CHEBI:58359"/>
        <dbReference type="ChEBI" id="CHEBI:59776"/>
        <dbReference type="ChEBI" id="CHEBI:597326"/>
        <dbReference type="EC" id="4.3.3.6"/>
    </reaction>
</comment>
<comment type="catalytic activity">
    <reaction evidence="1">
        <text>L-glutamine + H2O = L-glutamate + NH4(+)</text>
        <dbReference type="Rhea" id="RHEA:15889"/>
        <dbReference type="ChEBI" id="CHEBI:15377"/>
        <dbReference type="ChEBI" id="CHEBI:28938"/>
        <dbReference type="ChEBI" id="CHEBI:29985"/>
        <dbReference type="ChEBI" id="CHEBI:58359"/>
        <dbReference type="EC" id="3.5.1.2"/>
    </reaction>
</comment>
<comment type="pathway">
    <text evidence="1">Cofactor biosynthesis; pyridoxal 5'-phosphate biosynthesis.</text>
</comment>
<comment type="subunit">
    <text evidence="1">In the presence of PdxS, forms a dodecamer of heterodimers. Only shows activity in the heterodimer.</text>
</comment>
<comment type="similarity">
    <text evidence="1">Belongs to the glutaminase PdxT/SNO family.</text>
</comment>
<evidence type="ECO:0000255" key="1">
    <source>
        <dbReference type="HAMAP-Rule" id="MF_01615"/>
    </source>
</evidence>
<keyword id="KW-0315">Glutamine amidotransferase</keyword>
<keyword id="KW-0378">Hydrolase</keyword>
<keyword id="KW-0456">Lyase</keyword>
<keyword id="KW-0663">Pyridoxal phosphate</keyword>
<organism>
    <name type="scientific">Thermoanaerobacter sp. (strain X514)</name>
    <dbReference type="NCBI Taxonomy" id="399726"/>
    <lineage>
        <taxon>Bacteria</taxon>
        <taxon>Bacillati</taxon>
        <taxon>Bacillota</taxon>
        <taxon>Clostridia</taxon>
        <taxon>Thermoanaerobacterales</taxon>
        <taxon>Thermoanaerobacteraceae</taxon>
        <taxon>Thermoanaerobacter</taxon>
    </lineage>
</organism>
<feature type="chain" id="PRO_1000185913" description="Pyridoxal 5'-phosphate synthase subunit PdxT">
    <location>
        <begin position="1"/>
        <end position="189"/>
    </location>
</feature>
<feature type="active site" description="Nucleophile" evidence="1">
    <location>
        <position position="79"/>
    </location>
</feature>
<feature type="active site" description="Charge relay system" evidence="1">
    <location>
        <position position="171"/>
    </location>
</feature>
<feature type="active site" description="Charge relay system" evidence="1">
    <location>
        <position position="173"/>
    </location>
</feature>
<feature type="binding site" evidence="1">
    <location>
        <begin position="47"/>
        <end position="49"/>
    </location>
    <ligand>
        <name>L-glutamine</name>
        <dbReference type="ChEBI" id="CHEBI:58359"/>
    </ligand>
</feature>
<feature type="binding site" evidence="1">
    <location>
        <position position="106"/>
    </location>
    <ligand>
        <name>L-glutamine</name>
        <dbReference type="ChEBI" id="CHEBI:58359"/>
    </ligand>
</feature>
<feature type="binding site" evidence="1">
    <location>
        <begin position="135"/>
        <end position="136"/>
    </location>
    <ligand>
        <name>L-glutamine</name>
        <dbReference type="ChEBI" id="CHEBI:58359"/>
    </ligand>
</feature>
<proteinExistence type="inferred from homology"/>
<reference key="1">
    <citation type="submission" date="2008-01" db="EMBL/GenBank/DDBJ databases">
        <title>Complete sequence of Thermoanaerobacter sp. X514.</title>
        <authorList>
            <consortium name="US DOE Joint Genome Institute"/>
            <person name="Copeland A."/>
            <person name="Lucas S."/>
            <person name="Lapidus A."/>
            <person name="Barry K."/>
            <person name="Glavina del Rio T."/>
            <person name="Dalin E."/>
            <person name="Tice H."/>
            <person name="Pitluck S."/>
            <person name="Bruce D."/>
            <person name="Goodwin L."/>
            <person name="Saunders E."/>
            <person name="Brettin T."/>
            <person name="Detter J.C."/>
            <person name="Han C."/>
            <person name="Schmutz J."/>
            <person name="Larimer F."/>
            <person name="Land M."/>
            <person name="Hauser L."/>
            <person name="Kyrpides N."/>
            <person name="Kim E."/>
            <person name="Hemme C."/>
            <person name="Fields M.W."/>
            <person name="He Z."/>
            <person name="Zhou J."/>
            <person name="Richardson P."/>
        </authorList>
    </citation>
    <scope>NUCLEOTIDE SEQUENCE [LARGE SCALE GENOMIC DNA]</scope>
    <source>
        <strain>X514</strain>
    </source>
</reference>
<gene>
    <name evidence="1" type="primary">pdxT</name>
    <name type="ordered locus">Teth514_2240</name>
</gene>
<name>PDXT_THEPX</name>
<dbReference type="EC" id="4.3.3.6" evidence="1"/>
<dbReference type="EC" id="3.5.1.2" evidence="1"/>
<dbReference type="EMBL" id="CP000923">
    <property type="protein sequence ID" value="ABY93509.1"/>
    <property type="molecule type" value="Genomic_DNA"/>
</dbReference>
<dbReference type="RefSeq" id="WP_012268782.1">
    <property type="nucleotide sequence ID" value="NC_010320.1"/>
</dbReference>
<dbReference type="SMR" id="B0K4N6"/>
<dbReference type="KEGG" id="tex:Teth514_2240"/>
<dbReference type="HOGENOM" id="CLU_069674_2_0_9"/>
<dbReference type="UniPathway" id="UPA00245"/>
<dbReference type="Proteomes" id="UP000002155">
    <property type="component" value="Chromosome"/>
</dbReference>
<dbReference type="GO" id="GO:0005829">
    <property type="term" value="C:cytosol"/>
    <property type="evidence" value="ECO:0007669"/>
    <property type="project" value="TreeGrafter"/>
</dbReference>
<dbReference type="GO" id="GO:1903600">
    <property type="term" value="C:glutaminase complex"/>
    <property type="evidence" value="ECO:0007669"/>
    <property type="project" value="TreeGrafter"/>
</dbReference>
<dbReference type="GO" id="GO:0004359">
    <property type="term" value="F:glutaminase activity"/>
    <property type="evidence" value="ECO:0007669"/>
    <property type="project" value="UniProtKB-UniRule"/>
</dbReference>
<dbReference type="GO" id="GO:0036381">
    <property type="term" value="F:pyridoxal 5'-phosphate synthase (glutamine hydrolysing) activity"/>
    <property type="evidence" value="ECO:0007669"/>
    <property type="project" value="UniProtKB-UniRule"/>
</dbReference>
<dbReference type="GO" id="GO:0006543">
    <property type="term" value="P:glutamine catabolic process"/>
    <property type="evidence" value="ECO:0007669"/>
    <property type="project" value="UniProtKB-UniRule"/>
</dbReference>
<dbReference type="GO" id="GO:0042823">
    <property type="term" value="P:pyridoxal phosphate biosynthetic process"/>
    <property type="evidence" value="ECO:0007669"/>
    <property type="project" value="UniProtKB-UniRule"/>
</dbReference>
<dbReference type="GO" id="GO:0008614">
    <property type="term" value="P:pyridoxine metabolic process"/>
    <property type="evidence" value="ECO:0007669"/>
    <property type="project" value="TreeGrafter"/>
</dbReference>
<dbReference type="CDD" id="cd01749">
    <property type="entry name" value="GATase1_PB"/>
    <property type="match status" value="1"/>
</dbReference>
<dbReference type="FunFam" id="3.40.50.880:FF:000010">
    <property type="entry name" value="uncharacterized protein LOC100176842 isoform X2"/>
    <property type="match status" value="1"/>
</dbReference>
<dbReference type="Gene3D" id="3.40.50.880">
    <property type="match status" value="1"/>
</dbReference>
<dbReference type="HAMAP" id="MF_01615">
    <property type="entry name" value="PdxT"/>
    <property type="match status" value="1"/>
</dbReference>
<dbReference type="InterPro" id="IPR029062">
    <property type="entry name" value="Class_I_gatase-like"/>
</dbReference>
<dbReference type="InterPro" id="IPR002161">
    <property type="entry name" value="PdxT/SNO"/>
</dbReference>
<dbReference type="InterPro" id="IPR021196">
    <property type="entry name" value="PdxT/SNO_CS"/>
</dbReference>
<dbReference type="NCBIfam" id="TIGR03800">
    <property type="entry name" value="PLP_synth_Pdx2"/>
    <property type="match status" value="1"/>
</dbReference>
<dbReference type="PANTHER" id="PTHR31559">
    <property type="entry name" value="PYRIDOXAL 5'-PHOSPHATE SYNTHASE SUBUNIT SNO"/>
    <property type="match status" value="1"/>
</dbReference>
<dbReference type="PANTHER" id="PTHR31559:SF0">
    <property type="entry name" value="PYRIDOXAL 5'-PHOSPHATE SYNTHASE SUBUNIT SNO1-RELATED"/>
    <property type="match status" value="1"/>
</dbReference>
<dbReference type="Pfam" id="PF01174">
    <property type="entry name" value="SNO"/>
    <property type="match status" value="1"/>
</dbReference>
<dbReference type="PIRSF" id="PIRSF005639">
    <property type="entry name" value="Glut_amidoT_SNO"/>
    <property type="match status" value="1"/>
</dbReference>
<dbReference type="SUPFAM" id="SSF52317">
    <property type="entry name" value="Class I glutamine amidotransferase-like"/>
    <property type="match status" value="1"/>
</dbReference>
<dbReference type="PROSITE" id="PS01236">
    <property type="entry name" value="PDXT_SNO_1"/>
    <property type="match status" value="1"/>
</dbReference>
<dbReference type="PROSITE" id="PS51130">
    <property type="entry name" value="PDXT_SNO_2"/>
    <property type="match status" value="1"/>
</dbReference>
<protein>
    <recommendedName>
        <fullName evidence="1">Pyridoxal 5'-phosphate synthase subunit PdxT</fullName>
        <ecNumber evidence="1">4.3.3.6</ecNumber>
    </recommendedName>
    <alternativeName>
        <fullName evidence="1">Pdx2</fullName>
    </alternativeName>
    <alternativeName>
        <fullName evidence="1">Pyridoxal 5'-phosphate synthase glutaminase subunit</fullName>
        <ecNumber evidence="1">3.5.1.2</ecNumber>
    </alternativeName>
</protein>